<reference key="1">
    <citation type="journal article" date="1998" name="Nature">
        <title>Deciphering the biology of Mycobacterium tuberculosis from the complete genome sequence.</title>
        <authorList>
            <person name="Cole S.T."/>
            <person name="Brosch R."/>
            <person name="Parkhill J."/>
            <person name="Garnier T."/>
            <person name="Churcher C.M."/>
            <person name="Harris D.E."/>
            <person name="Gordon S.V."/>
            <person name="Eiglmeier K."/>
            <person name="Gas S."/>
            <person name="Barry C.E. III"/>
            <person name="Tekaia F."/>
            <person name="Badcock K."/>
            <person name="Basham D."/>
            <person name="Brown D."/>
            <person name="Chillingworth T."/>
            <person name="Connor R."/>
            <person name="Davies R.M."/>
            <person name="Devlin K."/>
            <person name="Feltwell T."/>
            <person name="Gentles S."/>
            <person name="Hamlin N."/>
            <person name="Holroyd S."/>
            <person name="Hornsby T."/>
            <person name="Jagels K."/>
            <person name="Krogh A."/>
            <person name="McLean J."/>
            <person name="Moule S."/>
            <person name="Murphy L.D."/>
            <person name="Oliver S."/>
            <person name="Osborne J."/>
            <person name="Quail M.A."/>
            <person name="Rajandream M.A."/>
            <person name="Rogers J."/>
            <person name="Rutter S."/>
            <person name="Seeger K."/>
            <person name="Skelton S."/>
            <person name="Squares S."/>
            <person name="Squares R."/>
            <person name="Sulston J.E."/>
            <person name="Taylor K."/>
            <person name="Whitehead S."/>
            <person name="Barrell B.G."/>
        </authorList>
    </citation>
    <scope>NUCLEOTIDE SEQUENCE [LARGE SCALE GENOMIC DNA]</scope>
    <source>
        <strain>ATCC 25618 / H37Rv</strain>
    </source>
</reference>
<reference key="2">
    <citation type="journal article" date="2011" name="Mol. Cell. Proteomics">
        <title>Proteogenomic analysis of Mycobacterium tuberculosis by high resolution mass spectrometry.</title>
        <authorList>
            <person name="Kelkar D.S."/>
            <person name="Kumar D."/>
            <person name="Kumar P."/>
            <person name="Balakrishnan L."/>
            <person name="Muthusamy B."/>
            <person name="Yadav A.K."/>
            <person name="Shrivastava P."/>
            <person name="Marimuthu A."/>
            <person name="Anand S."/>
            <person name="Sundaram H."/>
            <person name="Kingsbury R."/>
            <person name="Harsha H.C."/>
            <person name="Nair B."/>
            <person name="Prasad T.S."/>
            <person name="Chauhan D.S."/>
            <person name="Katoch K."/>
            <person name="Katoch V.M."/>
            <person name="Kumar P."/>
            <person name="Chaerkady R."/>
            <person name="Ramachandran S."/>
            <person name="Dash D."/>
            <person name="Pandey A."/>
        </authorList>
    </citation>
    <scope>IDENTIFICATION BY MASS SPECTROMETRY [LARGE SCALE ANALYSIS]</scope>
    <source>
        <strain>ATCC 25618 / H37Rv</strain>
    </source>
</reference>
<reference key="3">
    <citation type="journal article" date="2015" name="Mol. Microbiol.">
        <title>The Psp system of Mycobacterium tuberculosis integrates envelope stress-sensing and envelope-preserving functions.</title>
        <authorList>
            <person name="Datta P."/>
            <person name="Ravi J."/>
            <person name="Guerrini V."/>
            <person name="Chauhan R."/>
            <person name="Neiditch M.B."/>
            <person name="Shell S.S."/>
            <person name="Fortune S.M."/>
            <person name="Hancioglu B."/>
            <person name="Igoshin O.A."/>
            <person name="Gennaro M.L."/>
        </authorList>
    </citation>
    <scope>FUNCTION</scope>
    <scope>INTERACTION WITH PSPA AND RV2742C</scope>
    <scope>INDUCTION</scope>
    <scope>DISRUPTION PHENOTYPE</scope>
</reference>
<protein>
    <recommendedName>
        <fullName evidence="3">Putative envelope-preserving system protein Rv2743c</fullName>
    </recommendedName>
</protein>
<dbReference type="EMBL" id="AL123456">
    <property type="protein sequence ID" value="CCP45542.1"/>
    <property type="molecule type" value="Genomic_DNA"/>
</dbReference>
<dbReference type="RefSeq" id="NP_217259.1">
    <property type="nucleotide sequence ID" value="NC_000962.3"/>
</dbReference>
<dbReference type="SMR" id="I6YA50"/>
<dbReference type="STRING" id="83332.Rv2743c"/>
<dbReference type="PaxDb" id="83332-Rv2743c"/>
<dbReference type="DNASU" id="887779"/>
<dbReference type="GeneID" id="887779"/>
<dbReference type="KEGG" id="mtu:Rv2743c"/>
<dbReference type="KEGG" id="mtv:RVBD_2743c"/>
<dbReference type="PATRIC" id="fig|83332.111.peg.3054"/>
<dbReference type="TubercuList" id="Rv2743c"/>
<dbReference type="eggNOG" id="ENOG5034BWG">
    <property type="taxonomic scope" value="Bacteria"/>
</dbReference>
<dbReference type="InParanoid" id="I6YA50"/>
<dbReference type="OrthoDB" id="4750524at2"/>
<dbReference type="Proteomes" id="UP000001584">
    <property type="component" value="Chromosome"/>
</dbReference>
<dbReference type="GO" id="GO:0016020">
    <property type="term" value="C:membrane"/>
    <property type="evidence" value="ECO:0007669"/>
    <property type="project" value="UniProtKB-SubCell"/>
</dbReference>
<dbReference type="NCBIfam" id="NF047839">
    <property type="entry name" value="PspM_Rv2743c"/>
    <property type="match status" value="1"/>
</dbReference>
<comment type="function">
    <text evidence="2">Involved in preservation of envelope integrity and tolerance to surface stress (PubMed:25899163). Reverses the inhibitory effect of PspA on ClgR activity (PubMed:25899163). Facilitates intracellular growth of M.tuberculosis (PubMed:25899163).</text>
</comment>
<comment type="subunit">
    <text evidence="2">Interacts with PspA and Rv2742c.</text>
</comment>
<comment type="subcellular location">
    <subcellularLocation>
        <location evidence="1">Membrane</location>
        <topology evidence="1">Multi-pass membrane protein</topology>
    </subcellularLocation>
</comment>
<comment type="induction">
    <text evidence="2">Expression is regulated by ClgR.</text>
</comment>
<comment type="disruption phenotype">
    <text evidence="2">The Rv2743c-Rv2742c double mutation reduces intracellular ATP levels under surface-stress conditions to less than 60% of wild-type levels (PubMed:25899163). Inactivation of Rv2743c reduces mprA and sigB expression to 20% and 10% of wild-type levels, respectively, after treatment with SDS (PubMed:25899163). Inactivation increases M.tuberculosis susceptibility to the intramacrophage environment (PubMed:25899163).</text>
</comment>
<accession>I6YA50</accession>
<gene>
    <name evidence="4" type="ordered locus">Rv2743c</name>
</gene>
<organism>
    <name type="scientific">Mycobacterium tuberculosis (strain ATCC 25618 / H37Rv)</name>
    <dbReference type="NCBI Taxonomy" id="83332"/>
    <lineage>
        <taxon>Bacteria</taxon>
        <taxon>Bacillati</taxon>
        <taxon>Actinomycetota</taxon>
        <taxon>Actinomycetes</taxon>
        <taxon>Mycobacteriales</taxon>
        <taxon>Mycobacteriaceae</taxon>
        <taxon>Mycobacterium</taxon>
        <taxon>Mycobacterium tuberculosis complex</taxon>
    </lineage>
</organism>
<evidence type="ECO:0000255" key="1"/>
<evidence type="ECO:0000269" key="2">
    <source>
    </source>
</evidence>
<evidence type="ECO:0000305" key="3"/>
<evidence type="ECO:0000312" key="4">
    <source>
        <dbReference type="EMBL" id="CCP45542.1"/>
    </source>
</evidence>
<feature type="chain" id="PRO_0000450868" description="Putative envelope-preserving system protein Rv2743c">
    <location>
        <begin position="1"/>
        <end position="270"/>
    </location>
</feature>
<feature type="transmembrane region" description="Helical" evidence="1">
    <location>
        <begin position="50"/>
        <end position="72"/>
    </location>
</feature>
<feature type="transmembrane region" description="Helical" evidence="1">
    <location>
        <begin position="77"/>
        <end position="99"/>
    </location>
</feature>
<proteinExistence type="evidence at protein level"/>
<sequence>MAVKAGQRRPWRSLLQRGVDTAGDLADLVAQKISVAIDPRARLLRRRRRALRWGLVFTAGCLLWGLVTALLAAWGWFTSLLVITGTIAVTQAIPATLLLLRYRWLRSEPLPVRRPASVRRLPPPGSAARPAMSALGASERGFFSLLGVMERGAMLPADEIRDLTAAANQTSAAMVATAAEVVSMERAVQCSAASRSYLVPTINAFTAQLSTGVRQYNEMVTAAAQLVSSANGAGGAGPGQQRYREELAGATDRLVAWAQAFDELGGLPRR</sequence>
<name>Y2743_MYCTU</name>
<keyword id="KW-0472">Membrane</keyword>
<keyword id="KW-1185">Reference proteome</keyword>
<keyword id="KW-0346">Stress response</keyword>
<keyword id="KW-0812">Transmembrane</keyword>
<keyword id="KW-1133">Transmembrane helix</keyword>